<reference key="1">
    <citation type="journal article" date="2011" name="Stand. Genomic Sci.">
        <title>Complete genome sequence of Rhodospirillum rubrum type strain (S1).</title>
        <authorList>
            <person name="Munk A.C."/>
            <person name="Copeland A."/>
            <person name="Lucas S."/>
            <person name="Lapidus A."/>
            <person name="Del Rio T.G."/>
            <person name="Barry K."/>
            <person name="Detter J.C."/>
            <person name="Hammon N."/>
            <person name="Israni S."/>
            <person name="Pitluck S."/>
            <person name="Brettin T."/>
            <person name="Bruce D."/>
            <person name="Han C."/>
            <person name="Tapia R."/>
            <person name="Gilna P."/>
            <person name="Schmutz J."/>
            <person name="Larimer F."/>
            <person name="Land M."/>
            <person name="Kyrpides N.C."/>
            <person name="Mavromatis K."/>
            <person name="Richardson P."/>
            <person name="Rohde M."/>
            <person name="Goeker M."/>
            <person name="Klenk H.P."/>
            <person name="Zhang Y."/>
            <person name="Roberts G.P."/>
            <person name="Reslewic S."/>
            <person name="Schwartz D.C."/>
        </authorList>
    </citation>
    <scope>NUCLEOTIDE SEQUENCE [LARGE SCALE GENOMIC DNA]</scope>
    <source>
        <strain>ATCC 11170 / ATH 1.1.1 / DSM 467 / LMG 4362 / NCIMB 8255 / S1</strain>
    </source>
</reference>
<protein>
    <recommendedName>
        <fullName evidence="1">tRNA-specific 2-thiouridylase MnmA</fullName>
        <ecNumber evidence="1">2.8.1.13</ecNumber>
    </recommendedName>
</protein>
<accession>Q2RSS1</accession>
<name>MNMA_RHORT</name>
<evidence type="ECO:0000255" key="1">
    <source>
        <dbReference type="HAMAP-Rule" id="MF_00144"/>
    </source>
</evidence>
<gene>
    <name evidence="1" type="primary">mnmA</name>
    <name type="ordered locus">Rru_A2024</name>
</gene>
<dbReference type="EC" id="2.8.1.13" evidence="1"/>
<dbReference type="EMBL" id="CP000230">
    <property type="protein sequence ID" value="ABC22824.1"/>
    <property type="molecule type" value="Genomic_DNA"/>
</dbReference>
<dbReference type="RefSeq" id="WP_011389777.1">
    <property type="nucleotide sequence ID" value="NC_007643.1"/>
</dbReference>
<dbReference type="RefSeq" id="YP_427111.1">
    <property type="nucleotide sequence ID" value="NC_007643.1"/>
</dbReference>
<dbReference type="SMR" id="Q2RSS1"/>
<dbReference type="STRING" id="269796.Rru_A2024"/>
<dbReference type="EnsemblBacteria" id="ABC22824">
    <property type="protein sequence ID" value="ABC22824"/>
    <property type="gene ID" value="Rru_A2024"/>
</dbReference>
<dbReference type="KEGG" id="rru:Rru_A2024"/>
<dbReference type="PATRIC" id="fig|269796.9.peg.2111"/>
<dbReference type="eggNOG" id="COG0482">
    <property type="taxonomic scope" value="Bacteria"/>
</dbReference>
<dbReference type="HOGENOM" id="CLU_035188_0_1_5"/>
<dbReference type="PhylomeDB" id="Q2RSS1"/>
<dbReference type="Proteomes" id="UP000001929">
    <property type="component" value="Chromosome"/>
</dbReference>
<dbReference type="GO" id="GO:0005737">
    <property type="term" value="C:cytoplasm"/>
    <property type="evidence" value="ECO:0007669"/>
    <property type="project" value="UniProtKB-SubCell"/>
</dbReference>
<dbReference type="GO" id="GO:0005524">
    <property type="term" value="F:ATP binding"/>
    <property type="evidence" value="ECO:0007669"/>
    <property type="project" value="UniProtKB-KW"/>
</dbReference>
<dbReference type="GO" id="GO:0000049">
    <property type="term" value="F:tRNA binding"/>
    <property type="evidence" value="ECO:0007669"/>
    <property type="project" value="UniProtKB-KW"/>
</dbReference>
<dbReference type="GO" id="GO:0103016">
    <property type="term" value="F:tRNA-uridine 2-sulfurtransferase activity"/>
    <property type="evidence" value="ECO:0007669"/>
    <property type="project" value="UniProtKB-EC"/>
</dbReference>
<dbReference type="GO" id="GO:0002143">
    <property type="term" value="P:tRNA wobble position uridine thiolation"/>
    <property type="evidence" value="ECO:0007669"/>
    <property type="project" value="TreeGrafter"/>
</dbReference>
<dbReference type="CDD" id="cd01998">
    <property type="entry name" value="MnmA_TRMU-like"/>
    <property type="match status" value="1"/>
</dbReference>
<dbReference type="FunFam" id="3.40.50.620:FF:000115">
    <property type="entry name" value="tRNA-specific 2-thiouridylase MnmA"/>
    <property type="match status" value="1"/>
</dbReference>
<dbReference type="Gene3D" id="2.30.30.280">
    <property type="entry name" value="Adenine nucleotide alpha hydrolases-like domains"/>
    <property type="match status" value="1"/>
</dbReference>
<dbReference type="Gene3D" id="3.40.50.620">
    <property type="entry name" value="HUPs"/>
    <property type="match status" value="1"/>
</dbReference>
<dbReference type="Gene3D" id="2.40.30.10">
    <property type="entry name" value="Translation factors"/>
    <property type="match status" value="1"/>
</dbReference>
<dbReference type="HAMAP" id="MF_00144">
    <property type="entry name" value="tRNA_thiouridyl_MnmA"/>
    <property type="match status" value="1"/>
</dbReference>
<dbReference type="InterPro" id="IPR004506">
    <property type="entry name" value="MnmA-like"/>
</dbReference>
<dbReference type="InterPro" id="IPR046885">
    <property type="entry name" value="MnmA-like_C"/>
</dbReference>
<dbReference type="InterPro" id="IPR046884">
    <property type="entry name" value="MnmA-like_central"/>
</dbReference>
<dbReference type="InterPro" id="IPR023382">
    <property type="entry name" value="MnmA-like_central_sf"/>
</dbReference>
<dbReference type="InterPro" id="IPR014729">
    <property type="entry name" value="Rossmann-like_a/b/a_fold"/>
</dbReference>
<dbReference type="NCBIfam" id="NF001138">
    <property type="entry name" value="PRK00143.1"/>
    <property type="match status" value="1"/>
</dbReference>
<dbReference type="NCBIfam" id="TIGR00420">
    <property type="entry name" value="trmU"/>
    <property type="match status" value="1"/>
</dbReference>
<dbReference type="PANTHER" id="PTHR11933:SF5">
    <property type="entry name" value="MITOCHONDRIAL TRNA-SPECIFIC 2-THIOURIDYLASE 1"/>
    <property type="match status" value="1"/>
</dbReference>
<dbReference type="PANTHER" id="PTHR11933">
    <property type="entry name" value="TRNA 5-METHYLAMINOMETHYL-2-THIOURIDYLATE -METHYLTRANSFERASE"/>
    <property type="match status" value="1"/>
</dbReference>
<dbReference type="Pfam" id="PF03054">
    <property type="entry name" value="tRNA_Me_trans"/>
    <property type="match status" value="1"/>
</dbReference>
<dbReference type="Pfam" id="PF20258">
    <property type="entry name" value="tRNA_Me_trans_C"/>
    <property type="match status" value="1"/>
</dbReference>
<dbReference type="Pfam" id="PF20259">
    <property type="entry name" value="tRNA_Me_trans_M"/>
    <property type="match status" value="1"/>
</dbReference>
<dbReference type="SUPFAM" id="SSF52402">
    <property type="entry name" value="Adenine nucleotide alpha hydrolases-like"/>
    <property type="match status" value="1"/>
</dbReference>
<feature type="chain" id="PRO_0000349776" description="tRNA-specific 2-thiouridylase MnmA">
    <location>
        <begin position="1"/>
        <end position="377"/>
    </location>
</feature>
<feature type="region of interest" description="Interaction with tRNA" evidence="1">
    <location>
        <begin position="159"/>
        <end position="161"/>
    </location>
</feature>
<feature type="active site" description="Nucleophile" evidence="1">
    <location>
        <position position="113"/>
    </location>
</feature>
<feature type="active site" description="Cysteine persulfide intermediate" evidence="1">
    <location>
        <position position="210"/>
    </location>
</feature>
<feature type="binding site" evidence="1">
    <location>
        <begin position="18"/>
        <end position="25"/>
    </location>
    <ligand>
        <name>ATP</name>
        <dbReference type="ChEBI" id="CHEBI:30616"/>
    </ligand>
</feature>
<feature type="binding site" evidence="1">
    <location>
        <position position="44"/>
    </location>
    <ligand>
        <name>ATP</name>
        <dbReference type="ChEBI" id="CHEBI:30616"/>
    </ligand>
</feature>
<feature type="binding site" evidence="1">
    <location>
        <position position="137"/>
    </location>
    <ligand>
        <name>ATP</name>
        <dbReference type="ChEBI" id="CHEBI:30616"/>
    </ligand>
</feature>
<feature type="site" description="Interaction with tRNA" evidence="1">
    <location>
        <position position="138"/>
    </location>
</feature>
<feature type="site" description="Interaction with tRNA" evidence="1">
    <location>
        <position position="353"/>
    </location>
</feature>
<feature type="disulfide bond" description="Alternate" evidence="1">
    <location>
        <begin position="113"/>
        <end position="210"/>
    </location>
</feature>
<proteinExistence type="inferred from homology"/>
<organism>
    <name type="scientific">Rhodospirillum rubrum (strain ATCC 11170 / ATH 1.1.1 / DSM 467 / LMG 4362 / NCIMB 8255 / S1)</name>
    <dbReference type="NCBI Taxonomy" id="269796"/>
    <lineage>
        <taxon>Bacteria</taxon>
        <taxon>Pseudomonadati</taxon>
        <taxon>Pseudomonadota</taxon>
        <taxon>Alphaproteobacteria</taxon>
        <taxon>Rhodospirillales</taxon>
        <taxon>Rhodospirillaceae</taxon>
        <taxon>Rhodospirillum</taxon>
    </lineage>
</organism>
<comment type="function">
    <text evidence="1">Catalyzes the 2-thiolation of uridine at the wobble position (U34) of tRNA, leading to the formation of s(2)U34.</text>
</comment>
<comment type="catalytic activity">
    <reaction evidence="1">
        <text>S-sulfanyl-L-cysteinyl-[protein] + uridine(34) in tRNA + AH2 + ATP = 2-thiouridine(34) in tRNA + L-cysteinyl-[protein] + A + AMP + diphosphate + H(+)</text>
        <dbReference type="Rhea" id="RHEA:47032"/>
        <dbReference type="Rhea" id="RHEA-COMP:10131"/>
        <dbReference type="Rhea" id="RHEA-COMP:11726"/>
        <dbReference type="Rhea" id="RHEA-COMP:11727"/>
        <dbReference type="Rhea" id="RHEA-COMP:11728"/>
        <dbReference type="ChEBI" id="CHEBI:13193"/>
        <dbReference type="ChEBI" id="CHEBI:15378"/>
        <dbReference type="ChEBI" id="CHEBI:17499"/>
        <dbReference type="ChEBI" id="CHEBI:29950"/>
        <dbReference type="ChEBI" id="CHEBI:30616"/>
        <dbReference type="ChEBI" id="CHEBI:33019"/>
        <dbReference type="ChEBI" id="CHEBI:61963"/>
        <dbReference type="ChEBI" id="CHEBI:65315"/>
        <dbReference type="ChEBI" id="CHEBI:87170"/>
        <dbReference type="ChEBI" id="CHEBI:456215"/>
        <dbReference type="EC" id="2.8.1.13"/>
    </reaction>
</comment>
<comment type="subcellular location">
    <subcellularLocation>
        <location evidence="1">Cytoplasm</location>
    </subcellularLocation>
</comment>
<comment type="similarity">
    <text evidence="1">Belongs to the MnmA/TRMU family.</text>
</comment>
<keyword id="KW-0067">ATP-binding</keyword>
<keyword id="KW-0963">Cytoplasm</keyword>
<keyword id="KW-1015">Disulfide bond</keyword>
<keyword id="KW-0547">Nucleotide-binding</keyword>
<keyword id="KW-1185">Reference proteome</keyword>
<keyword id="KW-0694">RNA-binding</keyword>
<keyword id="KW-0808">Transferase</keyword>
<keyword id="KW-0819">tRNA processing</keyword>
<keyword id="KW-0820">tRNA-binding</keyword>
<sequence length="377" mass="39731">MSQTPLSPPPVGGRVVVAMSGGVDSSVTAALLKEQGHDVVGLTMRLYDHGKPLGPGARTCCAGQDIHDARRVADRLGIAHYVLDYESRFREDVIEPFAASYGRGETPIPCVLCNQTVKFRDLLAAALDLGGTALATGHYVRRLDGPEGPRLYRAVDPGRDQSYFLFATTKGQLGRLLFPLGAMASKDETRAIARRLGLAVGDKPDSQDICFVPDGDYAKVVERLRPGVVEAGEIVDLDGTVLGHHPGLIHFTVGQRRGVGIGGSAEPLYVIALDTATHRLVVGPHAALARREIAVSGLNWLGEGEGPASAGTRARIKIRHASPPFPGQIFPGAAAGEARVVLDEPAHGVAPGQAAVFYGLDDNDARVLGGGWIGASR</sequence>